<accession>A7H2Q9</accession>
<name>PYRB_CAMJD</name>
<gene>
    <name evidence="1" type="primary">pyrB</name>
    <name type="ordered locus">JJD26997_0624</name>
</gene>
<reference key="1">
    <citation type="submission" date="2007-07" db="EMBL/GenBank/DDBJ databases">
        <title>Complete genome sequence of Campylobacter jejuni subsp doylei 269.97 isolated from human blood.</title>
        <authorList>
            <person name="Fouts D.E."/>
            <person name="Mongodin E.F."/>
            <person name="Puiu D."/>
            <person name="Sebastian Y."/>
            <person name="Miller W.G."/>
            <person name="Mandrell R.E."/>
            <person name="Lastovica A.J."/>
            <person name="Nelson K.E."/>
        </authorList>
    </citation>
    <scope>NUCLEOTIDE SEQUENCE [LARGE SCALE GENOMIC DNA]</scope>
    <source>
        <strain>ATCC BAA-1458 / RM4099 / 269.97</strain>
    </source>
</reference>
<dbReference type="EC" id="2.1.3.2" evidence="1"/>
<dbReference type="EMBL" id="CP000768">
    <property type="protein sequence ID" value="ABS44816.1"/>
    <property type="molecule type" value="Genomic_DNA"/>
</dbReference>
<dbReference type="SMR" id="A7H2Q9"/>
<dbReference type="KEGG" id="cjd:JJD26997_0624"/>
<dbReference type="HOGENOM" id="CLU_043846_2_0_7"/>
<dbReference type="UniPathway" id="UPA00070">
    <property type="reaction ID" value="UER00116"/>
</dbReference>
<dbReference type="Proteomes" id="UP000002302">
    <property type="component" value="Chromosome"/>
</dbReference>
<dbReference type="GO" id="GO:0005829">
    <property type="term" value="C:cytosol"/>
    <property type="evidence" value="ECO:0007669"/>
    <property type="project" value="TreeGrafter"/>
</dbReference>
<dbReference type="GO" id="GO:0016597">
    <property type="term" value="F:amino acid binding"/>
    <property type="evidence" value="ECO:0007669"/>
    <property type="project" value="InterPro"/>
</dbReference>
<dbReference type="GO" id="GO:0004070">
    <property type="term" value="F:aspartate carbamoyltransferase activity"/>
    <property type="evidence" value="ECO:0007669"/>
    <property type="project" value="UniProtKB-UniRule"/>
</dbReference>
<dbReference type="GO" id="GO:0006207">
    <property type="term" value="P:'de novo' pyrimidine nucleobase biosynthetic process"/>
    <property type="evidence" value="ECO:0007669"/>
    <property type="project" value="InterPro"/>
</dbReference>
<dbReference type="GO" id="GO:0044205">
    <property type="term" value="P:'de novo' UMP biosynthetic process"/>
    <property type="evidence" value="ECO:0007669"/>
    <property type="project" value="UniProtKB-UniRule"/>
</dbReference>
<dbReference type="GO" id="GO:0006520">
    <property type="term" value="P:amino acid metabolic process"/>
    <property type="evidence" value="ECO:0007669"/>
    <property type="project" value="InterPro"/>
</dbReference>
<dbReference type="Gene3D" id="3.40.50.1370">
    <property type="entry name" value="Aspartate/ornithine carbamoyltransferase"/>
    <property type="match status" value="2"/>
</dbReference>
<dbReference type="HAMAP" id="MF_00001">
    <property type="entry name" value="Asp_carb_tr"/>
    <property type="match status" value="1"/>
</dbReference>
<dbReference type="InterPro" id="IPR006132">
    <property type="entry name" value="Asp/Orn_carbamoyltranf_P-bd"/>
</dbReference>
<dbReference type="InterPro" id="IPR006130">
    <property type="entry name" value="Asp/Orn_carbamoylTrfase"/>
</dbReference>
<dbReference type="InterPro" id="IPR036901">
    <property type="entry name" value="Asp/Orn_carbamoylTrfase_sf"/>
</dbReference>
<dbReference type="InterPro" id="IPR002082">
    <property type="entry name" value="Asp_carbamoyltransf"/>
</dbReference>
<dbReference type="InterPro" id="IPR006131">
    <property type="entry name" value="Asp_carbamoyltransf_Asp/Orn-bd"/>
</dbReference>
<dbReference type="NCBIfam" id="TIGR00670">
    <property type="entry name" value="asp_carb_tr"/>
    <property type="match status" value="1"/>
</dbReference>
<dbReference type="NCBIfam" id="NF002032">
    <property type="entry name" value="PRK00856.1"/>
    <property type="match status" value="1"/>
</dbReference>
<dbReference type="PANTHER" id="PTHR45753:SF6">
    <property type="entry name" value="ASPARTATE CARBAMOYLTRANSFERASE"/>
    <property type="match status" value="1"/>
</dbReference>
<dbReference type="PANTHER" id="PTHR45753">
    <property type="entry name" value="ORNITHINE CARBAMOYLTRANSFERASE, MITOCHONDRIAL"/>
    <property type="match status" value="1"/>
</dbReference>
<dbReference type="Pfam" id="PF00185">
    <property type="entry name" value="OTCace"/>
    <property type="match status" value="1"/>
</dbReference>
<dbReference type="Pfam" id="PF02729">
    <property type="entry name" value="OTCace_N"/>
    <property type="match status" value="1"/>
</dbReference>
<dbReference type="PRINTS" id="PR00100">
    <property type="entry name" value="AOTCASE"/>
</dbReference>
<dbReference type="PRINTS" id="PR00101">
    <property type="entry name" value="ATCASE"/>
</dbReference>
<dbReference type="SUPFAM" id="SSF53671">
    <property type="entry name" value="Aspartate/ornithine carbamoyltransferase"/>
    <property type="match status" value="1"/>
</dbReference>
<dbReference type="PROSITE" id="PS00097">
    <property type="entry name" value="CARBAMOYLTRANSFERASE"/>
    <property type="match status" value="1"/>
</dbReference>
<keyword id="KW-0665">Pyrimidine biosynthesis</keyword>
<keyword id="KW-0808">Transferase</keyword>
<proteinExistence type="inferred from homology"/>
<comment type="function">
    <text evidence="1">Catalyzes the condensation of carbamoyl phosphate and aspartate to form carbamoyl aspartate and inorganic phosphate, the committed step in the de novo pyrimidine nucleotide biosynthesis pathway.</text>
</comment>
<comment type="catalytic activity">
    <reaction evidence="1">
        <text>carbamoyl phosphate + L-aspartate = N-carbamoyl-L-aspartate + phosphate + H(+)</text>
        <dbReference type="Rhea" id="RHEA:20013"/>
        <dbReference type="ChEBI" id="CHEBI:15378"/>
        <dbReference type="ChEBI" id="CHEBI:29991"/>
        <dbReference type="ChEBI" id="CHEBI:32814"/>
        <dbReference type="ChEBI" id="CHEBI:43474"/>
        <dbReference type="ChEBI" id="CHEBI:58228"/>
        <dbReference type="EC" id="2.1.3.2"/>
    </reaction>
</comment>
<comment type="pathway">
    <text evidence="1">Pyrimidine metabolism; UMP biosynthesis via de novo pathway; (S)-dihydroorotate from bicarbonate: step 2/3.</text>
</comment>
<comment type="subunit">
    <text evidence="1">Heterododecamer (2C3:3R2) of six catalytic PyrB chains organized as two trimers (C3), and six regulatory PyrI chains organized as three dimers (R2).</text>
</comment>
<comment type="similarity">
    <text evidence="1">Belongs to the aspartate/ornithine carbamoyltransferase superfamily. ATCase family.</text>
</comment>
<feature type="chain" id="PRO_1000000004" description="Aspartate carbamoyltransferase catalytic subunit">
    <location>
        <begin position="1"/>
        <end position="295"/>
    </location>
</feature>
<feature type="binding site" evidence="1">
    <location>
        <position position="49"/>
    </location>
    <ligand>
        <name>carbamoyl phosphate</name>
        <dbReference type="ChEBI" id="CHEBI:58228"/>
    </ligand>
</feature>
<feature type="binding site" evidence="1">
    <location>
        <position position="50"/>
    </location>
    <ligand>
        <name>carbamoyl phosphate</name>
        <dbReference type="ChEBI" id="CHEBI:58228"/>
    </ligand>
</feature>
<feature type="binding site" evidence="1">
    <location>
        <position position="77"/>
    </location>
    <ligand>
        <name>L-aspartate</name>
        <dbReference type="ChEBI" id="CHEBI:29991"/>
    </ligand>
</feature>
<feature type="binding site" evidence="1">
    <location>
        <position position="99"/>
    </location>
    <ligand>
        <name>carbamoyl phosphate</name>
        <dbReference type="ChEBI" id="CHEBI:58228"/>
    </ligand>
</feature>
<feature type="binding site" evidence="1">
    <location>
        <position position="127"/>
    </location>
    <ligand>
        <name>carbamoyl phosphate</name>
        <dbReference type="ChEBI" id="CHEBI:58228"/>
    </ligand>
</feature>
<feature type="binding site" evidence="1">
    <location>
        <position position="130"/>
    </location>
    <ligand>
        <name>carbamoyl phosphate</name>
        <dbReference type="ChEBI" id="CHEBI:58228"/>
    </ligand>
</feature>
<feature type="binding site" evidence="1">
    <location>
        <position position="161"/>
    </location>
    <ligand>
        <name>L-aspartate</name>
        <dbReference type="ChEBI" id="CHEBI:29991"/>
    </ligand>
</feature>
<feature type="binding site" evidence="1">
    <location>
        <position position="212"/>
    </location>
    <ligand>
        <name>L-aspartate</name>
        <dbReference type="ChEBI" id="CHEBI:29991"/>
    </ligand>
</feature>
<feature type="binding site" evidence="1">
    <location>
        <position position="251"/>
    </location>
    <ligand>
        <name>carbamoyl phosphate</name>
        <dbReference type="ChEBI" id="CHEBI:58228"/>
    </ligand>
</feature>
<feature type="binding site" evidence="1">
    <location>
        <position position="252"/>
    </location>
    <ligand>
        <name>carbamoyl phosphate</name>
        <dbReference type="ChEBI" id="CHEBI:58228"/>
    </ligand>
</feature>
<sequence>MRHLITTKDFNKIEIMELFKEASDFLDEKPRTFLEGKSITTIFFENSTRTLSSFESAARRLGARVLRLDVSRSSSSKGETLYDTAANLDAMSPNAIVVRHANSGVPLILAKHMHCPVVNGGDGKHAHPTQALLDLFTIYNHFQSDVEGKKICIVGDIKNSRVAASNIELLSRFNLDITLVAPPHFMPNTHLKKYYKLDENIIANSDIIMSLRTQTERHNKTVYASLKDYANDFCIQKSLVKDKKLILLHPGPVNRNIDISDEMMSDERTLVLKQVKNGVAIRMAVLKKLILENEG</sequence>
<organism>
    <name type="scientific">Campylobacter jejuni subsp. doylei (strain ATCC BAA-1458 / RM4099 / 269.97)</name>
    <dbReference type="NCBI Taxonomy" id="360109"/>
    <lineage>
        <taxon>Bacteria</taxon>
        <taxon>Pseudomonadati</taxon>
        <taxon>Campylobacterota</taxon>
        <taxon>Epsilonproteobacteria</taxon>
        <taxon>Campylobacterales</taxon>
        <taxon>Campylobacteraceae</taxon>
        <taxon>Campylobacter</taxon>
    </lineage>
</organism>
<evidence type="ECO:0000255" key="1">
    <source>
        <dbReference type="HAMAP-Rule" id="MF_00001"/>
    </source>
</evidence>
<protein>
    <recommendedName>
        <fullName evidence="1">Aspartate carbamoyltransferase catalytic subunit</fullName>
        <ecNumber evidence="1">2.1.3.2</ecNumber>
    </recommendedName>
    <alternativeName>
        <fullName evidence="1">Aspartate transcarbamylase</fullName>
        <shortName evidence="1">ATCase</shortName>
    </alternativeName>
</protein>